<accession>P59222</accession>
<dbReference type="EMBL" id="AF522197">
    <property type="protein sequence ID" value="AAN45862.1"/>
    <property type="molecule type" value="mRNA"/>
</dbReference>
<dbReference type="CCDS" id="CCDS28010.1"/>
<dbReference type="RefSeq" id="NP_722485.1">
    <property type="nucleotide sequence ID" value="NM_153790.3"/>
</dbReference>
<dbReference type="SMR" id="P59222"/>
<dbReference type="BioGRID" id="230229">
    <property type="interactions" value="3"/>
</dbReference>
<dbReference type="FunCoup" id="P59222">
    <property type="interactions" value="124"/>
</dbReference>
<dbReference type="STRING" id="10090.ENSMUSP00000012161"/>
<dbReference type="GlyCosmos" id="P59222">
    <property type="glycosylation" value="4 sites, No reported glycans"/>
</dbReference>
<dbReference type="GlyGen" id="P59222">
    <property type="glycosylation" value="5 sites"/>
</dbReference>
<dbReference type="iPTMnet" id="P59222"/>
<dbReference type="PhosphoSitePlus" id="P59222"/>
<dbReference type="SwissPalm" id="P59222"/>
<dbReference type="CPTAC" id="non-CPTAC-3498"/>
<dbReference type="jPOST" id="P59222"/>
<dbReference type="PaxDb" id="10090-ENSMUSP00000012161"/>
<dbReference type="PeptideAtlas" id="P59222"/>
<dbReference type="ProteomicsDB" id="257397"/>
<dbReference type="Pumba" id="P59222"/>
<dbReference type="Antibodypedia" id="51072">
    <property type="antibodies" value="99 antibodies from 23 providers"/>
</dbReference>
<dbReference type="DNASU" id="224024"/>
<dbReference type="Ensembl" id="ENSMUST00000012161.5">
    <property type="protein sequence ID" value="ENSMUSP00000012161.4"/>
    <property type="gene ID" value="ENSMUSG00000012017.5"/>
</dbReference>
<dbReference type="GeneID" id="224024"/>
<dbReference type="KEGG" id="mmu:224024"/>
<dbReference type="UCSC" id="uc007ymd.1">
    <property type="organism name" value="mouse"/>
</dbReference>
<dbReference type="AGR" id="MGI:1858430"/>
<dbReference type="CTD" id="91179"/>
<dbReference type="MGI" id="MGI:1858430">
    <property type="gene designation" value="Scarf2"/>
</dbReference>
<dbReference type="VEuPathDB" id="HostDB:ENSMUSG00000012017"/>
<dbReference type="eggNOG" id="KOG1218">
    <property type="taxonomic scope" value="Eukaryota"/>
</dbReference>
<dbReference type="GeneTree" id="ENSGT00950000183101"/>
<dbReference type="HOGENOM" id="CLU_017821_1_0_1"/>
<dbReference type="InParanoid" id="P59222"/>
<dbReference type="OMA" id="ITCERGW"/>
<dbReference type="OrthoDB" id="6130531at2759"/>
<dbReference type="PhylomeDB" id="P59222"/>
<dbReference type="TreeFam" id="TF332598"/>
<dbReference type="BioGRID-ORCS" id="224024">
    <property type="hits" value="1 hit in 78 CRISPR screens"/>
</dbReference>
<dbReference type="ChiTaRS" id="Scarf2">
    <property type="organism name" value="mouse"/>
</dbReference>
<dbReference type="PRO" id="PR:P59222"/>
<dbReference type="Proteomes" id="UP000000589">
    <property type="component" value="Chromosome 16"/>
</dbReference>
<dbReference type="RNAct" id="P59222">
    <property type="molecule type" value="protein"/>
</dbReference>
<dbReference type="Bgee" id="ENSMUSG00000012017">
    <property type="expression patterns" value="Expressed in vault of skull and 160 other cell types or tissues"/>
</dbReference>
<dbReference type="ExpressionAtlas" id="P59222">
    <property type="expression patterns" value="baseline and differential"/>
</dbReference>
<dbReference type="GO" id="GO:0016020">
    <property type="term" value="C:membrane"/>
    <property type="evidence" value="ECO:0007669"/>
    <property type="project" value="UniProtKB-SubCell"/>
</dbReference>
<dbReference type="GO" id="GO:0005044">
    <property type="term" value="F:scavenger receptor activity"/>
    <property type="evidence" value="ECO:0000314"/>
    <property type="project" value="MGI"/>
</dbReference>
<dbReference type="GO" id="GO:0007157">
    <property type="term" value="P:heterophilic cell-cell adhesion via plasma membrane cell adhesion molecules"/>
    <property type="evidence" value="ECO:0000314"/>
    <property type="project" value="MGI"/>
</dbReference>
<dbReference type="FunFam" id="2.170.300.10:FF:000010">
    <property type="entry name" value="Scavenger receptor class F member 2"/>
    <property type="match status" value="1"/>
</dbReference>
<dbReference type="FunFam" id="2.170.300.10:FF:000013">
    <property type="entry name" value="Scavenger receptor class F, member 2"/>
    <property type="match status" value="1"/>
</dbReference>
<dbReference type="Gene3D" id="2.170.300.10">
    <property type="entry name" value="Tie2 ligand-binding domain superfamily"/>
    <property type="match status" value="3"/>
</dbReference>
<dbReference type="InterPro" id="IPR000742">
    <property type="entry name" value="EGF-like_dom"/>
</dbReference>
<dbReference type="InterPro" id="IPR009030">
    <property type="entry name" value="Growth_fac_rcpt_cys_sf"/>
</dbReference>
<dbReference type="InterPro" id="IPR002049">
    <property type="entry name" value="LE_dom"/>
</dbReference>
<dbReference type="InterPro" id="IPR042635">
    <property type="entry name" value="MEGF10/SREC1/2-like"/>
</dbReference>
<dbReference type="PANTHER" id="PTHR24043">
    <property type="entry name" value="SCAVENGER RECEPTOR CLASS F"/>
    <property type="match status" value="1"/>
</dbReference>
<dbReference type="PANTHER" id="PTHR24043:SF5">
    <property type="entry name" value="SCAVENGER RECEPTOR CLASS F MEMBER 2"/>
    <property type="match status" value="1"/>
</dbReference>
<dbReference type="PRINTS" id="PR00011">
    <property type="entry name" value="EGFLAMININ"/>
</dbReference>
<dbReference type="SMART" id="SM00181">
    <property type="entry name" value="EGF"/>
    <property type="match status" value="8"/>
</dbReference>
<dbReference type="SMART" id="SM00180">
    <property type="entry name" value="EGF_Lam"/>
    <property type="match status" value="6"/>
</dbReference>
<dbReference type="SUPFAM" id="SSF57184">
    <property type="entry name" value="Growth factor receptor domain"/>
    <property type="match status" value="1"/>
</dbReference>
<dbReference type="PROSITE" id="PS00022">
    <property type="entry name" value="EGF_1"/>
    <property type="match status" value="7"/>
</dbReference>
<dbReference type="PROSITE" id="PS01186">
    <property type="entry name" value="EGF_2"/>
    <property type="match status" value="4"/>
</dbReference>
<dbReference type="PROSITE" id="PS50026">
    <property type="entry name" value="EGF_3"/>
    <property type="match status" value="3"/>
</dbReference>
<name>SREC2_MOUSE</name>
<proteinExistence type="evidence at protein level"/>
<gene>
    <name type="primary">Scarf2</name>
    <name type="synonym">Srec2</name>
</gene>
<organism>
    <name type="scientific">Mus musculus</name>
    <name type="common">Mouse</name>
    <dbReference type="NCBI Taxonomy" id="10090"/>
    <lineage>
        <taxon>Eukaryota</taxon>
        <taxon>Metazoa</taxon>
        <taxon>Chordata</taxon>
        <taxon>Craniata</taxon>
        <taxon>Vertebrata</taxon>
        <taxon>Euteleostomi</taxon>
        <taxon>Mammalia</taxon>
        <taxon>Eutheria</taxon>
        <taxon>Euarchontoglires</taxon>
        <taxon>Glires</taxon>
        <taxon>Rodentia</taxon>
        <taxon>Myomorpha</taxon>
        <taxon>Muroidea</taxon>
        <taxon>Muridae</taxon>
        <taxon>Murinae</taxon>
        <taxon>Mus</taxon>
        <taxon>Mus</taxon>
    </lineage>
</organism>
<protein>
    <recommendedName>
        <fullName>Scavenger receptor class F member 2</fullName>
    </recommendedName>
    <alternativeName>
        <fullName>Scavenger receptor expressed by endothelial cells 2 protein</fullName>
        <shortName>SREC-II</shortName>
    </alternativeName>
</protein>
<evidence type="ECO:0000250" key="1">
    <source>
        <dbReference type="UniProtKB" id="Q96GP6"/>
    </source>
</evidence>
<evidence type="ECO:0000255" key="2"/>
<evidence type="ECO:0000255" key="3">
    <source>
        <dbReference type="PROSITE-ProRule" id="PRU00076"/>
    </source>
</evidence>
<evidence type="ECO:0000256" key="4">
    <source>
        <dbReference type="SAM" id="MobiDB-lite"/>
    </source>
</evidence>
<evidence type="ECO:0000305" key="5"/>
<evidence type="ECO:0007744" key="6">
    <source>
    </source>
</evidence>
<evidence type="ECO:0007744" key="7">
    <source>
    </source>
</evidence>
<comment type="function">
    <text>Probable adhesion protein, which mediates homophilic and heterophilic interactions. In contrast to SCARF1, it poorly mediates the binding and degradation of acetylated low density lipoprotein (Ac-LDL).</text>
</comment>
<comment type="subunit">
    <text>Homophilic and heterophilic interaction via its extracellular domain. Interacts with SCARF1. The heterophilic interaction with SCARF1, which is stronger than the homophilic interaction with itself, is suppressed by the presence of SCARF1 ligand such as Ac-LDL.</text>
</comment>
<comment type="subcellular location">
    <subcellularLocation>
        <location evidence="5">Membrane</location>
        <topology evidence="5">Single-pass type I membrane protein</topology>
    </subcellularLocation>
</comment>
<sequence>MEGAGSRGAGPARRQGARGLGLLLLLWLLPGLAAPQDLNPRGRNVCRTPGSQVLTCCAGWRQLGDECGIAVCEGNSTCSENEVCVRPGECRCRHGYFGANCDTKCPRQFWGPDCKERCSCHPHGQCEDVTGQCTCHARRWGARCEHACQCQHGTCHPRSGACRCEPGWWGAQCASACYCSATSRCDPQTGACLCHVGWWGRSCNNQCACNSSPCEQQSGRCQCRERMFGARCDRYCQCSHGRCHPVDGTCACDPGYRGKYCREPCPAGFYGPGCRRRCGQCKGQQPCTVVEGRCLTCEPGWNGTKCDQPCATGFYGEGCGHRCPPCRDGHACNHVTGKCTHCNAGWIGDRCETKCSNGTYGEDCAFVCSDCGSGHCDFQSGRCLCSPGVHGPHCNVTCPAGLHGVDCAQACSCHEESCDPVTGACHLETNQRKGVMGAGALLTLLLGLLLSLLGCCCACRGKDSARRELTLGRKKAPQRFCGSFSRISMKLPRIPLRRQKLPKVVVAHHDLDNTLNCSFLDPPSGLEQPSPSWSSRASFSSFDTTDEGPVYCVPHEEATADSRDLEATAALTEVAAVSLEPTGTSTPGEEAAVLPASSDSERSASSVEGPSGALYARVARREARPARTRNEAGGLSLSPSPERRKPPPPDPATKPKVSWIHGKHSAAAAAPSPPPAGRKAAPSPSGRKRTPSNSSVQPPGLTEEAPGPASPTPPRARARGRGLGLSEPTDAGGPPRSAPEAASMLAAELRDKTRSLGRAEKPPPPQKAKRSVLPAATVRTASASEASGSEKAAASAPAPETPRKKTPIQKPPRKKSREAAGEPSRAGTAPGAS</sequence>
<reference key="1">
    <citation type="journal article" date="2002" name="J. Biol. Chem.">
        <title>SREC-II, a new member of the scavenger receptor type F family, trans-interacts with SREC-I through its extracellular domain.</title>
        <authorList>
            <person name="Ishii J."/>
            <person name="Adachi H."/>
            <person name="Aoki J."/>
            <person name="Koizumi H."/>
            <person name="Tomita S."/>
            <person name="Suzuki T."/>
            <person name="Tsujimoto M."/>
            <person name="Inoue K."/>
            <person name="Arai H."/>
        </authorList>
    </citation>
    <scope>NUCLEOTIDE SEQUENCE [MRNA]</scope>
    <scope>CHARACTERIZATION</scope>
    <source>
        <strain>C57BL/6J</strain>
    </source>
</reference>
<reference key="2">
    <citation type="journal article" date="2005" name="Nat. Biotechnol.">
        <title>Immunoaffinity profiling of tyrosine phosphorylation in cancer cells.</title>
        <authorList>
            <person name="Rush J."/>
            <person name="Moritz A."/>
            <person name="Lee K.A."/>
            <person name="Guo A."/>
            <person name="Goss V.L."/>
            <person name="Spek E.J."/>
            <person name="Zhang H."/>
            <person name="Zha X.-M."/>
            <person name="Polakiewicz R.D."/>
            <person name="Comb M.J."/>
        </authorList>
    </citation>
    <scope>PHOSPHORYLATION [LARGE SCALE ANALYSIS] AT TYR-615</scope>
    <scope>IDENTIFICATION BY MASS SPECTROMETRY [LARGE SCALE ANALYSIS]</scope>
</reference>
<reference key="3">
    <citation type="journal article" date="2010" name="Cell">
        <title>A tissue-specific atlas of mouse protein phosphorylation and expression.</title>
        <authorList>
            <person name="Huttlin E.L."/>
            <person name="Jedrychowski M.P."/>
            <person name="Elias J.E."/>
            <person name="Goswami T."/>
            <person name="Rad R."/>
            <person name="Beausoleil S.A."/>
            <person name="Villen J."/>
            <person name="Haas W."/>
            <person name="Sowa M.E."/>
            <person name="Gygi S.P."/>
        </authorList>
    </citation>
    <scope>PHOSPHORYLATION [LARGE SCALE ANALYSIS] AT SER-538; SER-638; SER-640; SER-695 AND THR-712</scope>
    <scope>IDENTIFICATION BY MASS SPECTROMETRY [LARGE SCALE ANALYSIS]</scope>
    <source>
        <tissue>Brown adipose tissue</tissue>
        <tissue>Kidney</tissue>
        <tissue>Lung</tissue>
        <tissue>Spleen</tissue>
    </source>
</reference>
<keyword id="KW-0130">Cell adhesion</keyword>
<keyword id="KW-1015">Disulfide bond</keyword>
<keyword id="KW-0245">EGF-like domain</keyword>
<keyword id="KW-0325">Glycoprotein</keyword>
<keyword id="KW-0472">Membrane</keyword>
<keyword id="KW-0597">Phosphoprotein</keyword>
<keyword id="KW-0675">Receptor</keyword>
<keyword id="KW-1185">Reference proteome</keyword>
<keyword id="KW-0677">Repeat</keyword>
<keyword id="KW-0732">Signal</keyword>
<keyword id="KW-0812">Transmembrane</keyword>
<keyword id="KW-1133">Transmembrane helix</keyword>
<feature type="signal peptide" evidence="2">
    <location>
        <begin position="1"/>
        <end position="33"/>
    </location>
</feature>
<feature type="chain" id="PRO_0000007740" description="Scavenger receptor class F member 2">
    <location>
        <begin position="34"/>
        <end position="833"/>
    </location>
</feature>
<feature type="topological domain" description="Extracellular" evidence="2">
    <location>
        <begin position="34"/>
        <end position="433"/>
    </location>
</feature>
<feature type="transmembrane region" description="Helical" evidence="2">
    <location>
        <begin position="434"/>
        <end position="454"/>
    </location>
</feature>
<feature type="topological domain" description="Cytoplasmic" evidence="2">
    <location>
        <begin position="455"/>
        <end position="833"/>
    </location>
</feature>
<feature type="domain" description="EGF-like 1" evidence="3">
    <location>
        <begin position="63"/>
        <end position="102"/>
    </location>
</feature>
<feature type="domain" description="EGF-like 2" evidence="3">
    <location>
        <begin position="114"/>
        <end position="145"/>
    </location>
</feature>
<feature type="domain" description="EGF-like 3" evidence="3">
    <location>
        <begin position="140"/>
        <end position="174"/>
    </location>
</feature>
<feature type="domain" description="EGF-like 4" evidence="3">
    <location>
        <begin position="175"/>
        <end position="204"/>
    </location>
</feature>
<feature type="domain" description="EGF-like 5" evidence="3">
    <location>
        <begin position="205"/>
        <end position="233"/>
    </location>
</feature>
<feature type="domain" description="EGF-like 6" evidence="3">
    <location>
        <begin position="228"/>
        <end position="262"/>
    </location>
</feature>
<feature type="domain" description="EGF-like 7" evidence="3">
    <location>
        <begin position="364"/>
        <end position="395"/>
    </location>
</feature>
<feature type="region of interest" description="Disordered" evidence="4">
    <location>
        <begin position="578"/>
        <end position="833"/>
    </location>
</feature>
<feature type="compositionally biased region" description="Basic and acidic residues" evidence="4">
    <location>
        <begin position="619"/>
        <end position="630"/>
    </location>
</feature>
<feature type="compositionally biased region" description="Basic and acidic residues" evidence="4">
    <location>
        <begin position="748"/>
        <end position="761"/>
    </location>
</feature>
<feature type="compositionally biased region" description="Low complexity" evidence="4">
    <location>
        <begin position="781"/>
        <end position="798"/>
    </location>
</feature>
<feature type="compositionally biased region" description="Basic residues" evidence="4">
    <location>
        <begin position="804"/>
        <end position="816"/>
    </location>
</feature>
<feature type="modified residue" description="Phosphoserine" evidence="7">
    <location>
        <position position="538"/>
    </location>
</feature>
<feature type="modified residue" description="Phosphoserine" evidence="1">
    <location>
        <position position="600"/>
    </location>
</feature>
<feature type="modified residue" description="Phosphotyrosine" evidence="6">
    <location>
        <position position="615"/>
    </location>
</feature>
<feature type="modified residue" description="Phosphoserine" evidence="7">
    <location>
        <position position="638"/>
    </location>
</feature>
<feature type="modified residue" description="Phosphoserine" evidence="7">
    <location>
        <position position="640"/>
    </location>
</feature>
<feature type="modified residue" description="Phosphoserine" evidence="7">
    <location>
        <position position="695"/>
    </location>
</feature>
<feature type="modified residue" description="Phosphothreonine" evidence="7">
    <location>
        <position position="712"/>
    </location>
</feature>
<feature type="glycosylation site" description="N-linked (GlcNAc...) asparagine" evidence="2">
    <location>
        <position position="75"/>
    </location>
</feature>
<feature type="glycosylation site" description="N-linked (GlcNAc...) asparagine" evidence="2">
    <location>
        <position position="302"/>
    </location>
</feature>
<feature type="glycosylation site" description="N-linked (GlcNAc...) asparagine" evidence="2">
    <location>
        <position position="357"/>
    </location>
</feature>
<feature type="glycosylation site" description="N-linked (GlcNAc...) asparagine" evidence="2">
    <location>
        <position position="395"/>
    </location>
</feature>
<feature type="disulfide bond" evidence="3">
    <location>
        <begin position="67"/>
        <end position="78"/>
    </location>
</feature>
<feature type="disulfide bond" evidence="3">
    <location>
        <begin position="72"/>
        <end position="90"/>
    </location>
</feature>
<feature type="disulfide bond" evidence="3">
    <location>
        <begin position="92"/>
        <end position="101"/>
    </location>
</feature>
<feature type="disulfide bond" evidence="3">
    <location>
        <begin position="118"/>
        <end position="126"/>
    </location>
</feature>
<feature type="disulfide bond" evidence="3">
    <location>
        <begin position="120"/>
        <end position="133"/>
    </location>
</feature>
<feature type="disulfide bond" evidence="3">
    <location>
        <begin position="135"/>
        <end position="144"/>
    </location>
</feature>
<feature type="disulfide bond" evidence="3">
    <location>
        <begin position="148"/>
        <end position="155"/>
    </location>
</feature>
<feature type="disulfide bond" evidence="3">
    <location>
        <begin position="150"/>
        <end position="162"/>
    </location>
</feature>
<feature type="disulfide bond" evidence="3">
    <location>
        <begin position="164"/>
        <end position="173"/>
    </location>
</feature>
<feature type="disulfide bond" evidence="3">
    <location>
        <begin position="177"/>
        <end position="185"/>
    </location>
</feature>
<feature type="disulfide bond" evidence="3">
    <location>
        <begin position="179"/>
        <end position="192"/>
    </location>
</feature>
<feature type="disulfide bond" evidence="3">
    <location>
        <begin position="194"/>
        <end position="203"/>
    </location>
</feature>
<feature type="disulfide bond" evidence="3">
    <location>
        <begin position="207"/>
        <end position="214"/>
    </location>
</feature>
<feature type="disulfide bond" evidence="3">
    <location>
        <begin position="209"/>
        <end position="221"/>
    </location>
</feature>
<feature type="disulfide bond" evidence="3">
    <location>
        <begin position="223"/>
        <end position="232"/>
    </location>
</feature>
<feature type="disulfide bond" evidence="3">
    <location>
        <begin position="236"/>
        <end position="243"/>
    </location>
</feature>
<feature type="disulfide bond" evidence="3">
    <location>
        <begin position="238"/>
        <end position="250"/>
    </location>
</feature>
<feature type="disulfide bond" evidence="3">
    <location>
        <begin position="252"/>
        <end position="261"/>
    </location>
</feature>
<feature type="disulfide bond" evidence="3">
    <location>
        <begin position="368"/>
        <end position="376"/>
    </location>
</feature>
<feature type="disulfide bond" evidence="3">
    <location>
        <begin position="371"/>
        <end position="383"/>
    </location>
</feature>
<feature type="disulfide bond" evidence="3">
    <location>
        <begin position="385"/>
        <end position="394"/>
    </location>
</feature>